<organism>
    <name type="scientific">Escherichia coli (strain SE11)</name>
    <dbReference type="NCBI Taxonomy" id="409438"/>
    <lineage>
        <taxon>Bacteria</taxon>
        <taxon>Pseudomonadati</taxon>
        <taxon>Pseudomonadota</taxon>
        <taxon>Gammaproteobacteria</taxon>
        <taxon>Enterobacterales</taxon>
        <taxon>Enterobacteriaceae</taxon>
        <taxon>Escherichia</taxon>
    </lineage>
</organism>
<dbReference type="EMBL" id="AP009240">
    <property type="protein sequence ID" value="BAG77667.1"/>
    <property type="molecule type" value="Genomic_DNA"/>
</dbReference>
<dbReference type="RefSeq" id="WP_001283421.1">
    <property type="nucleotide sequence ID" value="NC_011415.1"/>
</dbReference>
<dbReference type="SMR" id="B6I0W0"/>
<dbReference type="GeneID" id="93776218"/>
<dbReference type="KEGG" id="ecy:ECSE_2143"/>
<dbReference type="HOGENOM" id="CLU_014841_3_0_6"/>
<dbReference type="Proteomes" id="UP000008199">
    <property type="component" value="Chromosome"/>
</dbReference>
<dbReference type="GO" id="GO:0005737">
    <property type="term" value="C:cytoplasm"/>
    <property type="evidence" value="ECO:0007669"/>
    <property type="project" value="UniProtKB-SubCell"/>
</dbReference>
<dbReference type="GO" id="GO:0009380">
    <property type="term" value="C:excinuclease repair complex"/>
    <property type="evidence" value="ECO:0007669"/>
    <property type="project" value="InterPro"/>
</dbReference>
<dbReference type="GO" id="GO:0003677">
    <property type="term" value="F:DNA binding"/>
    <property type="evidence" value="ECO:0007669"/>
    <property type="project" value="UniProtKB-UniRule"/>
</dbReference>
<dbReference type="GO" id="GO:0009381">
    <property type="term" value="F:excinuclease ABC activity"/>
    <property type="evidence" value="ECO:0007669"/>
    <property type="project" value="UniProtKB-UniRule"/>
</dbReference>
<dbReference type="GO" id="GO:0006289">
    <property type="term" value="P:nucleotide-excision repair"/>
    <property type="evidence" value="ECO:0007669"/>
    <property type="project" value="UniProtKB-UniRule"/>
</dbReference>
<dbReference type="GO" id="GO:0009432">
    <property type="term" value="P:SOS response"/>
    <property type="evidence" value="ECO:0007669"/>
    <property type="project" value="UniProtKB-UniRule"/>
</dbReference>
<dbReference type="CDD" id="cd10434">
    <property type="entry name" value="GIY-YIG_UvrC_Cho"/>
    <property type="match status" value="1"/>
</dbReference>
<dbReference type="FunFam" id="1.10.150.20:FF:000005">
    <property type="entry name" value="UvrABC system protein C"/>
    <property type="match status" value="1"/>
</dbReference>
<dbReference type="FunFam" id="3.30.420.340:FF:000001">
    <property type="entry name" value="UvrABC system protein C"/>
    <property type="match status" value="1"/>
</dbReference>
<dbReference type="FunFam" id="3.40.1440.10:FF:000001">
    <property type="entry name" value="UvrABC system protein C"/>
    <property type="match status" value="1"/>
</dbReference>
<dbReference type="FunFam" id="4.10.860.10:FF:000002">
    <property type="entry name" value="UvrABC system protein C"/>
    <property type="match status" value="1"/>
</dbReference>
<dbReference type="Gene3D" id="1.10.150.20">
    <property type="entry name" value="5' to 3' exonuclease, C-terminal subdomain"/>
    <property type="match status" value="1"/>
</dbReference>
<dbReference type="Gene3D" id="3.40.1440.10">
    <property type="entry name" value="GIY-YIG endonuclease"/>
    <property type="match status" value="1"/>
</dbReference>
<dbReference type="Gene3D" id="4.10.860.10">
    <property type="entry name" value="UVR domain"/>
    <property type="match status" value="1"/>
</dbReference>
<dbReference type="Gene3D" id="3.30.420.340">
    <property type="entry name" value="UvrC, RNAse H endonuclease domain"/>
    <property type="match status" value="1"/>
</dbReference>
<dbReference type="HAMAP" id="MF_00203">
    <property type="entry name" value="UvrC"/>
    <property type="match status" value="1"/>
</dbReference>
<dbReference type="InterPro" id="IPR000305">
    <property type="entry name" value="GIY-YIG_endonuc"/>
</dbReference>
<dbReference type="InterPro" id="IPR035901">
    <property type="entry name" value="GIY-YIG_endonuc_sf"/>
</dbReference>
<dbReference type="InterPro" id="IPR047296">
    <property type="entry name" value="GIY-YIG_UvrC_Cho"/>
</dbReference>
<dbReference type="InterPro" id="IPR003583">
    <property type="entry name" value="Hlx-hairpin-Hlx_DNA-bd_motif"/>
</dbReference>
<dbReference type="InterPro" id="IPR010994">
    <property type="entry name" value="RuvA_2-like"/>
</dbReference>
<dbReference type="InterPro" id="IPR001943">
    <property type="entry name" value="UVR_dom"/>
</dbReference>
<dbReference type="InterPro" id="IPR036876">
    <property type="entry name" value="UVR_dom_sf"/>
</dbReference>
<dbReference type="InterPro" id="IPR050066">
    <property type="entry name" value="UvrABC_protein_C"/>
</dbReference>
<dbReference type="InterPro" id="IPR004791">
    <property type="entry name" value="UvrC"/>
</dbReference>
<dbReference type="InterPro" id="IPR001162">
    <property type="entry name" value="UvrC_RNase_H_dom"/>
</dbReference>
<dbReference type="InterPro" id="IPR038476">
    <property type="entry name" value="UvrC_RNase_H_dom_sf"/>
</dbReference>
<dbReference type="NCBIfam" id="NF001824">
    <property type="entry name" value="PRK00558.1-5"/>
    <property type="match status" value="1"/>
</dbReference>
<dbReference type="NCBIfam" id="TIGR00194">
    <property type="entry name" value="uvrC"/>
    <property type="match status" value="1"/>
</dbReference>
<dbReference type="PANTHER" id="PTHR30562:SF1">
    <property type="entry name" value="UVRABC SYSTEM PROTEIN C"/>
    <property type="match status" value="1"/>
</dbReference>
<dbReference type="PANTHER" id="PTHR30562">
    <property type="entry name" value="UVRC/OXIDOREDUCTASE"/>
    <property type="match status" value="1"/>
</dbReference>
<dbReference type="Pfam" id="PF01541">
    <property type="entry name" value="GIY-YIG"/>
    <property type="match status" value="1"/>
</dbReference>
<dbReference type="Pfam" id="PF14520">
    <property type="entry name" value="HHH_5"/>
    <property type="match status" value="1"/>
</dbReference>
<dbReference type="Pfam" id="PF02151">
    <property type="entry name" value="UVR"/>
    <property type="match status" value="1"/>
</dbReference>
<dbReference type="Pfam" id="PF22920">
    <property type="entry name" value="UvrC_RNaseH"/>
    <property type="match status" value="1"/>
</dbReference>
<dbReference type="Pfam" id="PF08459">
    <property type="entry name" value="UvrC_RNaseH_dom"/>
    <property type="match status" value="1"/>
</dbReference>
<dbReference type="SMART" id="SM00465">
    <property type="entry name" value="GIYc"/>
    <property type="match status" value="1"/>
</dbReference>
<dbReference type="SMART" id="SM00278">
    <property type="entry name" value="HhH1"/>
    <property type="match status" value="2"/>
</dbReference>
<dbReference type="SUPFAM" id="SSF46600">
    <property type="entry name" value="C-terminal UvrC-binding domain of UvrB"/>
    <property type="match status" value="1"/>
</dbReference>
<dbReference type="SUPFAM" id="SSF82771">
    <property type="entry name" value="GIY-YIG endonuclease"/>
    <property type="match status" value="1"/>
</dbReference>
<dbReference type="SUPFAM" id="SSF47781">
    <property type="entry name" value="RuvA domain 2-like"/>
    <property type="match status" value="1"/>
</dbReference>
<dbReference type="PROSITE" id="PS50164">
    <property type="entry name" value="GIY_YIG"/>
    <property type="match status" value="1"/>
</dbReference>
<dbReference type="PROSITE" id="PS50151">
    <property type="entry name" value="UVR"/>
    <property type="match status" value="1"/>
</dbReference>
<dbReference type="PROSITE" id="PS50165">
    <property type="entry name" value="UVRC"/>
    <property type="match status" value="1"/>
</dbReference>
<feature type="chain" id="PRO_1000099479" description="UvrABC system protein C">
    <location>
        <begin position="1"/>
        <end position="610"/>
    </location>
</feature>
<feature type="domain" description="GIY-YIG" evidence="1">
    <location>
        <begin position="16"/>
        <end position="94"/>
    </location>
</feature>
<feature type="domain" description="UVR" evidence="1">
    <location>
        <begin position="204"/>
        <end position="239"/>
    </location>
</feature>
<accession>B6I0W0</accession>
<keyword id="KW-0963">Cytoplasm</keyword>
<keyword id="KW-0227">DNA damage</keyword>
<keyword id="KW-0228">DNA excision</keyword>
<keyword id="KW-0234">DNA repair</keyword>
<keyword id="KW-0267">Excision nuclease</keyword>
<keyword id="KW-0742">SOS response</keyword>
<name>UVRC_ECOSE</name>
<comment type="function">
    <text evidence="1">The UvrABC repair system catalyzes the recognition and processing of DNA lesions. UvrC both incises the 5' and 3' sides of the lesion. The N-terminal half is responsible for the 3' incision and the C-terminal half is responsible for the 5' incision.</text>
</comment>
<comment type="subunit">
    <text evidence="1">Interacts with UvrB in an incision complex.</text>
</comment>
<comment type="subcellular location">
    <subcellularLocation>
        <location evidence="1">Cytoplasm</location>
    </subcellularLocation>
</comment>
<comment type="similarity">
    <text evidence="1">Belongs to the UvrC family.</text>
</comment>
<gene>
    <name evidence="1" type="primary">uvrC</name>
    <name type="ordered locus">ECSE_2143</name>
</gene>
<proteinExistence type="inferred from homology"/>
<evidence type="ECO:0000255" key="1">
    <source>
        <dbReference type="HAMAP-Rule" id="MF_00203"/>
    </source>
</evidence>
<protein>
    <recommendedName>
        <fullName evidence="1">UvrABC system protein C</fullName>
        <shortName evidence="1">Protein UvrC</shortName>
    </recommendedName>
    <alternativeName>
        <fullName evidence="1">Excinuclease ABC subunit C</fullName>
    </alternativeName>
</protein>
<reference key="1">
    <citation type="journal article" date="2008" name="DNA Res.">
        <title>Complete genome sequence and comparative analysis of the wild-type commensal Escherichia coli strain SE11 isolated from a healthy adult.</title>
        <authorList>
            <person name="Oshima K."/>
            <person name="Toh H."/>
            <person name="Ogura Y."/>
            <person name="Sasamoto H."/>
            <person name="Morita H."/>
            <person name="Park S.-H."/>
            <person name="Ooka T."/>
            <person name="Iyoda S."/>
            <person name="Taylor T.D."/>
            <person name="Hayashi T."/>
            <person name="Itoh K."/>
            <person name="Hattori M."/>
        </authorList>
    </citation>
    <scope>NUCLEOTIDE SEQUENCE [LARGE SCALE GENOMIC DNA]</scope>
    <source>
        <strain>SE11</strain>
    </source>
</reference>
<sequence length="610" mass="68188">MSDQFDAKAFLKTVTSQPGVYRMYDAGGTVIYVGKAKDLKKRLSSYFRSNLASRKTEALVAQIQQIDVTVTHTETEALLLEHNYIKLYQPRYNVLLRDDKSYPFIFLSGDTHPRLAMHRGAKHAKGEYFGPFPNGYAVRETLALLQKIFPIRQCENSVYRNRSRPCLQYQIGRCLGPCVEGLVSEEEYAQQVEYVRLFLSGKDDQVLTQLISRMETASQNLEFEEAARIRDQIQAVRRVTEKQFVSNTGDDLDVIGVAFDAGMACVHVLFIRQGKVLGSRSYFPKVPGGTELSEVVETFVGQFYLQGSQMRTLPGEILLDFNLSDKTLLADSLSELAGRKINVQTKPRGDRARYLKLARTNAATALTSKLSQQSTVHQRLTALASVLKLPEVKRMECFDISHTMGEQTVASCVVFDANGPLRAEYRRYNITGITPGDDYAAMNQVLRRRYGKAIDDSKIPDVILIDGGKGQLAQAKNVFAELDVSWDKNHPLLLGVAKGADRKAGLETLFFEPEGEGFSLPPDSPALHVIQHIRDESHDHAIGGHRKKRAKVKNTSSLETIEGVGPKRRQMLLKYMGGLQGLRNASVEEIAKVPGISQGLAEKIFWSLKH</sequence>